<feature type="chain" id="PRO_1000148651" description="UPF0352 protein HAPS_0210">
    <location>
        <begin position="1"/>
        <end position="74"/>
    </location>
</feature>
<accession>B8F3K1</accession>
<keyword id="KW-1185">Reference proteome</keyword>
<sequence>MATKSKYQDKQIEALLNDLIVTLEKHKAPVDLSLMALGNMITNILVTNVQSPQQREVLAEAFSSALKNSLKSAK</sequence>
<evidence type="ECO:0000255" key="1">
    <source>
        <dbReference type="HAMAP-Rule" id="MF_00816"/>
    </source>
</evidence>
<comment type="similarity">
    <text evidence="1">Belongs to the UPF0352 family.</text>
</comment>
<gene>
    <name type="ordered locus">HAPS_0210</name>
</gene>
<organism>
    <name type="scientific">Glaesserella parasuis serovar 5 (strain SH0165)</name>
    <name type="common">Haemophilus parasuis</name>
    <dbReference type="NCBI Taxonomy" id="557723"/>
    <lineage>
        <taxon>Bacteria</taxon>
        <taxon>Pseudomonadati</taxon>
        <taxon>Pseudomonadota</taxon>
        <taxon>Gammaproteobacteria</taxon>
        <taxon>Pasteurellales</taxon>
        <taxon>Pasteurellaceae</taxon>
        <taxon>Glaesserella</taxon>
    </lineage>
</organism>
<protein>
    <recommendedName>
        <fullName evidence="1">UPF0352 protein HAPS_0210</fullName>
    </recommendedName>
</protein>
<dbReference type="EMBL" id="CP001321">
    <property type="protein sequence ID" value="ACL31903.1"/>
    <property type="molecule type" value="Genomic_DNA"/>
</dbReference>
<dbReference type="RefSeq" id="WP_005710865.1">
    <property type="nucleotide sequence ID" value="NC_011852.1"/>
</dbReference>
<dbReference type="SMR" id="B8F3K1"/>
<dbReference type="STRING" id="557723.HAPS_0210"/>
<dbReference type="KEGG" id="hap:HAPS_0210"/>
<dbReference type="HOGENOM" id="CLU_175457_0_0_6"/>
<dbReference type="Proteomes" id="UP000006743">
    <property type="component" value="Chromosome"/>
</dbReference>
<dbReference type="Gene3D" id="1.10.3390.10">
    <property type="entry name" value="YejL-like"/>
    <property type="match status" value="1"/>
</dbReference>
<dbReference type="HAMAP" id="MF_00816">
    <property type="entry name" value="UPF0352"/>
    <property type="match status" value="1"/>
</dbReference>
<dbReference type="InterPro" id="IPR009857">
    <property type="entry name" value="UPF0352"/>
</dbReference>
<dbReference type="InterPro" id="IPR023202">
    <property type="entry name" value="YejL_sf"/>
</dbReference>
<dbReference type="NCBIfam" id="NF010242">
    <property type="entry name" value="PRK13689.1"/>
    <property type="match status" value="1"/>
</dbReference>
<dbReference type="Pfam" id="PF07208">
    <property type="entry name" value="DUF1414"/>
    <property type="match status" value="1"/>
</dbReference>
<dbReference type="PIRSF" id="PIRSF006188">
    <property type="entry name" value="UCP006188"/>
    <property type="match status" value="1"/>
</dbReference>
<dbReference type="SUPFAM" id="SSF158651">
    <property type="entry name" value="YejL-like"/>
    <property type="match status" value="1"/>
</dbReference>
<proteinExistence type="inferred from homology"/>
<name>Y210_GLAP5</name>
<reference key="1">
    <citation type="journal article" date="2009" name="J. Bacteriol.">
        <title>Complete genome sequence of Haemophilus parasuis SH0165.</title>
        <authorList>
            <person name="Yue M."/>
            <person name="Yang F."/>
            <person name="Yang J."/>
            <person name="Bei W."/>
            <person name="Cai X."/>
            <person name="Chen L."/>
            <person name="Dong J."/>
            <person name="Zhou R."/>
            <person name="Jin M."/>
            <person name="Jin Q."/>
            <person name="Chen H."/>
        </authorList>
    </citation>
    <scope>NUCLEOTIDE SEQUENCE [LARGE SCALE GENOMIC DNA]</scope>
    <source>
        <strain>SH0165</strain>
    </source>
</reference>